<protein>
    <recommendedName>
        <fullName evidence="1">UPF0145 protein LMHCC_2435</fullName>
    </recommendedName>
</protein>
<name>Y2435_LISMH</name>
<dbReference type="EMBL" id="CP001175">
    <property type="protein sequence ID" value="ACK40770.1"/>
    <property type="molecule type" value="Genomic_DNA"/>
</dbReference>
<dbReference type="RefSeq" id="WP_003725735.1">
    <property type="nucleotide sequence ID" value="NC_011660.1"/>
</dbReference>
<dbReference type="SMR" id="B8DGL7"/>
<dbReference type="KEGG" id="lmh:LMHCC_2435"/>
<dbReference type="HOGENOM" id="CLU_117144_3_1_9"/>
<dbReference type="Gene3D" id="3.30.110.70">
    <property type="entry name" value="Hypothetical protein apc22750. Chain B"/>
    <property type="match status" value="1"/>
</dbReference>
<dbReference type="HAMAP" id="MF_00338">
    <property type="entry name" value="UPF0145"/>
    <property type="match status" value="1"/>
</dbReference>
<dbReference type="InterPro" id="IPR035439">
    <property type="entry name" value="UPF0145_dom_sf"/>
</dbReference>
<dbReference type="InterPro" id="IPR002765">
    <property type="entry name" value="UPF0145_YbjQ-like"/>
</dbReference>
<dbReference type="NCBIfam" id="NF002224">
    <property type="entry name" value="PRK01119.1"/>
    <property type="match status" value="1"/>
</dbReference>
<dbReference type="PANTHER" id="PTHR34068">
    <property type="entry name" value="UPF0145 PROTEIN YBJQ"/>
    <property type="match status" value="1"/>
</dbReference>
<dbReference type="PANTHER" id="PTHR34068:SF1">
    <property type="entry name" value="UPF0145 PROTEIN YBJQ"/>
    <property type="match status" value="1"/>
</dbReference>
<dbReference type="Pfam" id="PF01906">
    <property type="entry name" value="YbjQ_1"/>
    <property type="match status" value="1"/>
</dbReference>
<dbReference type="SUPFAM" id="SSF117782">
    <property type="entry name" value="YbjQ-like"/>
    <property type="match status" value="1"/>
</dbReference>
<organism>
    <name type="scientific">Listeria monocytogenes serotype 4a (strain HCC23)</name>
    <dbReference type="NCBI Taxonomy" id="552536"/>
    <lineage>
        <taxon>Bacteria</taxon>
        <taxon>Bacillati</taxon>
        <taxon>Bacillota</taxon>
        <taxon>Bacilli</taxon>
        <taxon>Bacillales</taxon>
        <taxon>Listeriaceae</taxon>
        <taxon>Listeria</taxon>
    </lineage>
</organism>
<reference key="1">
    <citation type="journal article" date="2011" name="J. Bacteriol.">
        <title>Genome sequence of lineage III Listeria monocytogenes strain HCC23.</title>
        <authorList>
            <person name="Steele C.L."/>
            <person name="Donaldson J.R."/>
            <person name="Paul D."/>
            <person name="Banes M.M."/>
            <person name="Arick T."/>
            <person name="Bridges S.M."/>
            <person name="Lawrence M.L."/>
        </authorList>
    </citation>
    <scope>NUCLEOTIDE SEQUENCE [LARGE SCALE GENOMIC DNA]</scope>
    <source>
        <strain>HCC23</strain>
    </source>
</reference>
<gene>
    <name type="ordered locus">LMHCC_2435</name>
</gene>
<comment type="similarity">
    <text evidence="1">Belongs to the UPF0145 family.</text>
</comment>
<proteinExistence type="inferred from homology"/>
<sequence length="110" mass="11992">MIVTTSPNIEGKQIIEYKKIVFGEVITGVNFMKDIGAGLRNFFGGRSQGYEDELINAREEAIREMEQRAKDIGANAVIGVDIDYEVLGADNGMLMVTASGTAVVIEAQDY</sequence>
<feature type="chain" id="PRO_1000200231" description="UPF0145 protein LMHCC_2435">
    <location>
        <begin position="1"/>
        <end position="110"/>
    </location>
</feature>
<evidence type="ECO:0000255" key="1">
    <source>
        <dbReference type="HAMAP-Rule" id="MF_00338"/>
    </source>
</evidence>
<accession>B8DGL7</accession>